<comment type="function">
    <text evidence="1">ATP-dependent specificity component of the Clp protease. It directs the protease to specific substrates. Can perform chaperone functions in the absence of ClpP.</text>
</comment>
<comment type="subunit">
    <text evidence="1">Component of the ClpX-ClpP complex. Forms a hexameric ring that, in the presence of ATP, binds to fourteen ClpP subunits assembled into a disk-like structure with a central cavity, resembling the structure of eukaryotic proteasomes.</text>
</comment>
<comment type="similarity">
    <text evidence="1">Belongs to the ClpX chaperone family.</text>
</comment>
<proteinExistence type="inferred from homology"/>
<dbReference type="EMBL" id="CP000518">
    <property type="protein sequence ID" value="ABL92843.1"/>
    <property type="molecule type" value="Genomic_DNA"/>
</dbReference>
<dbReference type="SMR" id="A1UJ35"/>
<dbReference type="STRING" id="189918.Mkms_3649"/>
<dbReference type="KEGG" id="mkm:Mkms_3649"/>
<dbReference type="HOGENOM" id="CLU_014218_8_2_11"/>
<dbReference type="OrthoDB" id="9804062at2"/>
<dbReference type="GO" id="GO:0009376">
    <property type="term" value="C:HslUV protease complex"/>
    <property type="evidence" value="ECO:0007669"/>
    <property type="project" value="TreeGrafter"/>
</dbReference>
<dbReference type="GO" id="GO:0005524">
    <property type="term" value="F:ATP binding"/>
    <property type="evidence" value="ECO:0007669"/>
    <property type="project" value="UniProtKB-UniRule"/>
</dbReference>
<dbReference type="GO" id="GO:0016887">
    <property type="term" value="F:ATP hydrolysis activity"/>
    <property type="evidence" value="ECO:0007669"/>
    <property type="project" value="InterPro"/>
</dbReference>
<dbReference type="GO" id="GO:0140662">
    <property type="term" value="F:ATP-dependent protein folding chaperone"/>
    <property type="evidence" value="ECO:0007669"/>
    <property type="project" value="InterPro"/>
</dbReference>
<dbReference type="GO" id="GO:0046983">
    <property type="term" value="F:protein dimerization activity"/>
    <property type="evidence" value="ECO:0007669"/>
    <property type="project" value="InterPro"/>
</dbReference>
<dbReference type="GO" id="GO:0051082">
    <property type="term" value="F:unfolded protein binding"/>
    <property type="evidence" value="ECO:0007669"/>
    <property type="project" value="UniProtKB-UniRule"/>
</dbReference>
<dbReference type="GO" id="GO:0008270">
    <property type="term" value="F:zinc ion binding"/>
    <property type="evidence" value="ECO:0007669"/>
    <property type="project" value="InterPro"/>
</dbReference>
<dbReference type="GO" id="GO:0051301">
    <property type="term" value="P:cell division"/>
    <property type="evidence" value="ECO:0007669"/>
    <property type="project" value="TreeGrafter"/>
</dbReference>
<dbReference type="GO" id="GO:0051603">
    <property type="term" value="P:proteolysis involved in protein catabolic process"/>
    <property type="evidence" value="ECO:0007669"/>
    <property type="project" value="TreeGrafter"/>
</dbReference>
<dbReference type="CDD" id="cd19497">
    <property type="entry name" value="RecA-like_ClpX"/>
    <property type="match status" value="1"/>
</dbReference>
<dbReference type="FunFam" id="1.10.8.60:FF:000002">
    <property type="entry name" value="ATP-dependent Clp protease ATP-binding subunit ClpX"/>
    <property type="match status" value="1"/>
</dbReference>
<dbReference type="FunFam" id="3.40.50.300:FF:000005">
    <property type="entry name" value="ATP-dependent Clp protease ATP-binding subunit ClpX"/>
    <property type="match status" value="1"/>
</dbReference>
<dbReference type="Gene3D" id="1.10.8.60">
    <property type="match status" value="1"/>
</dbReference>
<dbReference type="Gene3D" id="6.20.220.10">
    <property type="entry name" value="ClpX chaperone, C4-type zinc finger domain"/>
    <property type="match status" value="1"/>
</dbReference>
<dbReference type="Gene3D" id="3.40.50.300">
    <property type="entry name" value="P-loop containing nucleotide triphosphate hydrolases"/>
    <property type="match status" value="1"/>
</dbReference>
<dbReference type="HAMAP" id="MF_00175">
    <property type="entry name" value="ClpX"/>
    <property type="match status" value="1"/>
</dbReference>
<dbReference type="InterPro" id="IPR003593">
    <property type="entry name" value="AAA+_ATPase"/>
</dbReference>
<dbReference type="InterPro" id="IPR050052">
    <property type="entry name" value="ATP-dep_Clp_protease_ClpX"/>
</dbReference>
<dbReference type="InterPro" id="IPR003959">
    <property type="entry name" value="ATPase_AAA_core"/>
</dbReference>
<dbReference type="InterPro" id="IPR019489">
    <property type="entry name" value="Clp_ATPase_C"/>
</dbReference>
<dbReference type="InterPro" id="IPR004487">
    <property type="entry name" value="Clp_protease_ATP-bd_su_ClpX"/>
</dbReference>
<dbReference type="InterPro" id="IPR046425">
    <property type="entry name" value="ClpX_bact"/>
</dbReference>
<dbReference type="InterPro" id="IPR027417">
    <property type="entry name" value="P-loop_NTPase"/>
</dbReference>
<dbReference type="InterPro" id="IPR010603">
    <property type="entry name" value="Znf_CppX_C4"/>
</dbReference>
<dbReference type="InterPro" id="IPR038366">
    <property type="entry name" value="Znf_CppX_C4_sf"/>
</dbReference>
<dbReference type="NCBIfam" id="TIGR00382">
    <property type="entry name" value="clpX"/>
    <property type="match status" value="1"/>
</dbReference>
<dbReference type="NCBIfam" id="NF003745">
    <property type="entry name" value="PRK05342.1"/>
    <property type="match status" value="1"/>
</dbReference>
<dbReference type="PANTHER" id="PTHR48102:SF7">
    <property type="entry name" value="ATP-DEPENDENT CLP PROTEASE ATP-BINDING SUBUNIT CLPX-LIKE, MITOCHONDRIAL"/>
    <property type="match status" value="1"/>
</dbReference>
<dbReference type="PANTHER" id="PTHR48102">
    <property type="entry name" value="ATP-DEPENDENT CLP PROTEASE ATP-BINDING SUBUNIT CLPX-LIKE, MITOCHONDRIAL-RELATED"/>
    <property type="match status" value="1"/>
</dbReference>
<dbReference type="Pfam" id="PF07724">
    <property type="entry name" value="AAA_2"/>
    <property type="match status" value="1"/>
</dbReference>
<dbReference type="Pfam" id="PF10431">
    <property type="entry name" value="ClpB_D2-small"/>
    <property type="match status" value="1"/>
</dbReference>
<dbReference type="Pfam" id="PF06689">
    <property type="entry name" value="zf-C4_ClpX"/>
    <property type="match status" value="1"/>
</dbReference>
<dbReference type="SMART" id="SM00382">
    <property type="entry name" value="AAA"/>
    <property type="match status" value="1"/>
</dbReference>
<dbReference type="SMART" id="SM01086">
    <property type="entry name" value="ClpB_D2-small"/>
    <property type="match status" value="1"/>
</dbReference>
<dbReference type="SMART" id="SM00994">
    <property type="entry name" value="zf-C4_ClpX"/>
    <property type="match status" value="1"/>
</dbReference>
<dbReference type="SUPFAM" id="SSF57716">
    <property type="entry name" value="Glucocorticoid receptor-like (DNA-binding domain)"/>
    <property type="match status" value="1"/>
</dbReference>
<dbReference type="SUPFAM" id="SSF52540">
    <property type="entry name" value="P-loop containing nucleoside triphosphate hydrolases"/>
    <property type="match status" value="1"/>
</dbReference>
<dbReference type="PROSITE" id="PS51902">
    <property type="entry name" value="CLPX_ZB"/>
    <property type="match status" value="1"/>
</dbReference>
<protein>
    <recommendedName>
        <fullName evidence="1">ATP-dependent Clp protease ATP-binding subunit ClpX</fullName>
    </recommendedName>
</protein>
<accession>A1UJ35</accession>
<name>CLPX_MYCSK</name>
<evidence type="ECO:0000255" key="1">
    <source>
        <dbReference type="HAMAP-Rule" id="MF_00175"/>
    </source>
</evidence>
<evidence type="ECO:0000255" key="2">
    <source>
        <dbReference type="PROSITE-ProRule" id="PRU01250"/>
    </source>
</evidence>
<reference key="1">
    <citation type="submission" date="2006-12" db="EMBL/GenBank/DDBJ databases">
        <title>Complete sequence of chromosome of Mycobacterium sp. KMS.</title>
        <authorList>
            <consortium name="US DOE Joint Genome Institute"/>
            <person name="Copeland A."/>
            <person name="Lucas S."/>
            <person name="Lapidus A."/>
            <person name="Barry K."/>
            <person name="Detter J.C."/>
            <person name="Glavina del Rio T."/>
            <person name="Hammon N."/>
            <person name="Israni S."/>
            <person name="Dalin E."/>
            <person name="Tice H."/>
            <person name="Pitluck S."/>
            <person name="Kiss H."/>
            <person name="Brettin T."/>
            <person name="Bruce D."/>
            <person name="Han C."/>
            <person name="Tapia R."/>
            <person name="Gilna P."/>
            <person name="Schmutz J."/>
            <person name="Larimer F."/>
            <person name="Land M."/>
            <person name="Hauser L."/>
            <person name="Kyrpides N."/>
            <person name="Mikhailova N."/>
            <person name="Miller C.D."/>
            <person name="Richardson P."/>
        </authorList>
    </citation>
    <scope>NUCLEOTIDE SEQUENCE [LARGE SCALE GENOMIC DNA]</scope>
    <source>
        <strain>KMS</strain>
    </source>
</reference>
<organism>
    <name type="scientific">Mycobacterium sp. (strain KMS)</name>
    <dbReference type="NCBI Taxonomy" id="189918"/>
    <lineage>
        <taxon>Bacteria</taxon>
        <taxon>Bacillati</taxon>
        <taxon>Actinomycetota</taxon>
        <taxon>Actinomycetes</taxon>
        <taxon>Mycobacteriales</taxon>
        <taxon>Mycobacteriaceae</taxon>
        <taxon>Mycobacterium</taxon>
    </lineage>
</organism>
<gene>
    <name evidence="1" type="primary">clpX</name>
    <name type="ordered locus">Mkms_3649</name>
</gene>
<keyword id="KW-0067">ATP-binding</keyword>
<keyword id="KW-0143">Chaperone</keyword>
<keyword id="KW-0479">Metal-binding</keyword>
<keyword id="KW-0547">Nucleotide-binding</keyword>
<keyword id="KW-0862">Zinc</keyword>
<feature type="chain" id="PRO_1000024590" description="ATP-dependent Clp protease ATP-binding subunit ClpX">
    <location>
        <begin position="1"/>
        <end position="426"/>
    </location>
</feature>
<feature type="domain" description="ClpX-type ZB" evidence="2">
    <location>
        <begin position="1"/>
        <end position="54"/>
    </location>
</feature>
<feature type="binding site" evidence="2">
    <location>
        <position position="13"/>
    </location>
    <ligand>
        <name>Zn(2+)</name>
        <dbReference type="ChEBI" id="CHEBI:29105"/>
    </ligand>
</feature>
<feature type="binding site" evidence="2">
    <location>
        <position position="16"/>
    </location>
    <ligand>
        <name>Zn(2+)</name>
        <dbReference type="ChEBI" id="CHEBI:29105"/>
    </ligand>
</feature>
<feature type="binding site" evidence="2">
    <location>
        <position position="35"/>
    </location>
    <ligand>
        <name>Zn(2+)</name>
        <dbReference type="ChEBI" id="CHEBI:29105"/>
    </ligand>
</feature>
<feature type="binding site" evidence="2">
    <location>
        <position position="38"/>
    </location>
    <ligand>
        <name>Zn(2+)</name>
        <dbReference type="ChEBI" id="CHEBI:29105"/>
    </ligand>
</feature>
<feature type="binding site" evidence="1">
    <location>
        <begin position="122"/>
        <end position="129"/>
    </location>
    <ligand>
        <name>ATP</name>
        <dbReference type="ChEBI" id="CHEBI:30616"/>
    </ligand>
</feature>
<sequence length="426" mass="46745">MARIGDGGDLLKCSFCGKSQKQVKKLIAGPGVYICDECIDLCNEIIEEELADADEVKLDELPKPAEIREFLENYVIGQDTAKRTLAVAVYNHYKRIQAGEKSRDSRTEPVELTKSNILMLGPTGCGKTYLAQTLAKMLNVPFAIADATALTEAGYVGEDVENILLKLIQAADYDVKRAETGIIYIDEVDKIARKSENPSITRDVSGEGVQQALLKILEGTQASVPPQGGRKHPHQEFIQIDTTNVLFIVAGAFAGLEKIVSDRVGKRGLGFGAEVRSKAEIDTQDHFAEVMPEDLIKFGLIPEFIGRLPVVASVTNLDKESLVKILSEPKNALVKQYTRLFEMDGVELEFTGDALDAIADQAIHRGTGARGLRAIMEEVLLPVMYDIPSRDDVAKVVVTKETVQDNVLPTIVPRKPSRPERRDKSA</sequence>